<gene>
    <name type="primary">PLEKHA4</name>
    <name type="synonym">PEPP1</name>
</gene>
<protein>
    <recommendedName>
        <fullName>Pleckstrin homology domain-containing family A member 4</fullName>
        <shortName>PH domain-containing family A member 4</shortName>
    </recommendedName>
    <alternativeName>
        <fullName>Phosphoinositol 3-phosphate-binding protein 1</fullName>
        <shortName>PEPP-1</shortName>
    </alternativeName>
</protein>
<evidence type="ECO:0000255" key="1">
    <source>
        <dbReference type="PROSITE-ProRule" id="PRU00145"/>
    </source>
</evidence>
<evidence type="ECO:0000256" key="2">
    <source>
        <dbReference type="SAM" id="MobiDB-lite"/>
    </source>
</evidence>
<evidence type="ECO:0000269" key="3">
    <source>
    </source>
</evidence>
<evidence type="ECO:0000269" key="4">
    <source>
    </source>
</evidence>
<evidence type="ECO:0000303" key="5">
    <source>
    </source>
</evidence>
<evidence type="ECO:0000305" key="6"/>
<evidence type="ECO:0007744" key="7">
    <source>
    </source>
</evidence>
<evidence type="ECO:0007744" key="8">
    <source>
    </source>
</evidence>
<evidence type="ECO:0007829" key="9">
    <source>
        <dbReference type="PDB" id="1UPQ"/>
    </source>
</evidence>
<comment type="function">
    <text evidence="3">Binds specifically to phosphatidylinositol 3-phosphate (PtdIns3P), but not to other phosphoinositides.</text>
</comment>
<comment type="interaction">
    <interactant intactId="EBI-716549">
        <id>Q9H4M7</id>
    </interactant>
    <interactant intactId="EBI-26359852">
        <id>Q5ZXN6</id>
        <label>ankX</label>
    </interactant>
    <organismsDiffer>true</organismsDiffer>
    <experiments>2</experiments>
</comment>
<comment type="interaction">
    <interactant intactId="EBI-12394782">
        <id>Q9H4M7-2</id>
    </interactant>
    <interactant intactId="EBI-740929">
        <id>Q53G59</id>
        <label>KLHL12</label>
    </interactant>
    <organismsDiffer>false</organismsDiffer>
    <experiments>3</experiments>
</comment>
<comment type="interaction">
    <interactant intactId="EBI-12394782">
        <id>Q9H4M7-2</id>
    </interactant>
    <interactant intactId="EBI-19944212">
        <id>A8MW99</id>
        <label>MEI4</label>
    </interactant>
    <organismsDiffer>false</organismsDiffer>
    <experiments>3</experiments>
</comment>
<comment type="interaction">
    <interactant intactId="EBI-12394782">
        <id>Q9H4M7-2</id>
    </interactant>
    <interactant intactId="EBI-12394782">
        <id>Q9H4M7-2</id>
        <label>PLEKHA4</label>
    </interactant>
    <organismsDiffer>false</organismsDiffer>
    <experiments>3</experiments>
</comment>
<comment type="subcellular location">
    <subcellularLocation>
        <location evidence="6">Cytoplasm</location>
    </subcellularLocation>
    <subcellularLocation>
        <location evidence="6">Membrane</location>
        <topology evidence="6">Peripheral membrane protein</topology>
    </subcellularLocation>
</comment>
<comment type="alternative products">
    <event type="alternative splicing"/>
    <isoform>
        <id>Q9H4M7-1</id>
        <name>1</name>
        <sequence type="displayed"/>
    </isoform>
    <isoform>
        <id>Q9H4M7-2</id>
        <name>2</name>
        <sequence type="described" ref="VSP_009770 VSP_009771 VSP_009772"/>
    </isoform>
</comment>
<comment type="tissue specificity">
    <text evidence="3">Highly expressed in melanoma. Detected at low levels in heart, skeletal muscle, kidney, liver and small intestine.</text>
</comment>
<comment type="sequence caution" evidence="6">
    <conflict type="erroneous initiation">
        <sequence resource="EMBL-CDS" id="AAH33832"/>
    </conflict>
</comment>
<name>PKHA4_HUMAN</name>
<organism>
    <name type="scientific">Homo sapiens</name>
    <name type="common">Human</name>
    <dbReference type="NCBI Taxonomy" id="9606"/>
    <lineage>
        <taxon>Eukaryota</taxon>
        <taxon>Metazoa</taxon>
        <taxon>Chordata</taxon>
        <taxon>Craniata</taxon>
        <taxon>Vertebrata</taxon>
        <taxon>Euteleostomi</taxon>
        <taxon>Mammalia</taxon>
        <taxon>Eutheria</taxon>
        <taxon>Euarchontoglires</taxon>
        <taxon>Primates</taxon>
        <taxon>Haplorrhini</taxon>
        <taxon>Catarrhini</taxon>
        <taxon>Hominidae</taxon>
        <taxon>Homo</taxon>
    </lineage>
</organism>
<sequence>MEGSRPRSSLSLASSASTISSLSSLSPKKPTRAVNKIHAFGKRGNALRRDPNLPVHIRGWLHKQDSSGLRLWKRRWFVLSGHCLFYYKDSREESVLGSVLLPSYNIRPDGPGAPRGRRFTFTAEHPGMRTYVLAADTLEDLRGWLRALGRASRAEGDDYGQPRSPARPQPGEGPGGPGGPPEVSRGEEGRISESPEVTRLSRGRGRPRLLTPSPTTDLHSGLQMRRARSPDLFTPLSRPPSPLSLPRPRSAPARRPPAPSGDTAPPARPHTPLSRIDVRPPLDWGPQRQTLSRPPTPRRGPPSEAGGGKPPRSPQHWSQEPRTQAHSGSPTYLQLPPRPPGTRASMVLLPGPPLESTFHQSLETDTLLTKLCGQDRLLRRLQEEIDQKQEEKEQLEAALELTRQQLGQATREAGAPGRAWGRQRLLQDRLVSVRATLCHLTQERERVWDTYSGLEQELGTLRETLEYLLHLGSPQDRVSAQQQLWMVEDTLAGLGGPQKPPPHTEPDSPSPVLQGEESSERESLPESLELSSPRSPETDWGRPPGGDKDLASPHLGLGSPRVSRASSPEGRHLPSPQLGTKAPVARPRMSAQEQLERMRRNQECGRPFPRPTSPRLLTLGRTLSPARRQPDVEQRPVVGHSGAQKWLRSSGSWSSPRNTTPYLPTSEGHRERVLSLSQALATEASQWHRMMTGGNLDSQGDPLPGVPLPPSDPTRQETPPPRSPPVANSGSTGFSRRGSGRGGGPTPWGPAWDAGIAPPVLPQDEGAWPLRVTLLQSSF</sequence>
<reference key="1">
    <citation type="journal article" date="2000" name="Biochem. J.">
        <title>Identification of pleckstrin-homology-domain-containing proteins with novel phosphoinositide-binding specificities.</title>
        <authorList>
            <person name="Dowler S.J."/>
            <person name="Currie R.A."/>
            <person name="Campbell D.G."/>
            <person name="Deak M."/>
            <person name="Kular G."/>
            <person name="Downes C.P."/>
            <person name="Alessi D.R."/>
        </authorList>
    </citation>
    <scope>NUCLEOTIDE SEQUENCE [MRNA] (ISOFORM 1)</scope>
    <scope>FUNCTION</scope>
    <scope>TISSUE SPECIFICITY</scope>
</reference>
<reference key="2">
    <citation type="journal article" date="2004" name="Genome Res.">
        <title>The status, quality, and expansion of the NIH full-length cDNA project: the Mammalian Gene Collection (MGC).</title>
        <authorList>
            <consortium name="The MGC Project Team"/>
        </authorList>
    </citation>
    <scope>NUCLEOTIDE SEQUENCE [LARGE SCALE MRNA] (ISOFORMS 1 AND 2)</scope>
    <scope>VARIANT VAL-37</scope>
    <source>
        <tissue>Brain</tissue>
        <tissue>Melanoma</tissue>
        <tissue>Uterus</tissue>
    </source>
</reference>
<reference key="3">
    <citation type="journal article" date="2013" name="J. Proteome Res.">
        <title>Toward a comprehensive characterization of a human cancer cell phosphoproteome.</title>
        <authorList>
            <person name="Zhou H."/>
            <person name="Di Palma S."/>
            <person name="Preisinger C."/>
            <person name="Peng M."/>
            <person name="Polat A.N."/>
            <person name="Heck A.J."/>
            <person name="Mohammed S."/>
        </authorList>
    </citation>
    <scope>PHOSPHORYLATION [LARGE SCALE ANALYSIS] AT SER-559</scope>
    <scope>IDENTIFICATION BY MASS SPECTROMETRY [LARGE SCALE ANALYSIS]</scope>
    <source>
        <tissue>Erythroleukemia</tissue>
    </source>
</reference>
<reference key="4">
    <citation type="journal article" date="2014" name="J. Proteomics">
        <title>An enzyme assisted RP-RPLC approach for in-depth analysis of human liver phosphoproteome.</title>
        <authorList>
            <person name="Bian Y."/>
            <person name="Song C."/>
            <person name="Cheng K."/>
            <person name="Dong M."/>
            <person name="Wang F."/>
            <person name="Huang J."/>
            <person name="Sun D."/>
            <person name="Wang L."/>
            <person name="Ye M."/>
            <person name="Zou H."/>
        </authorList>
    </citation>
    <scope>PHOSPHORYLATION [LARGE SCALE ANALYSIS] AT SER-164</scope>
    <scope>IDENTIFICATION BY MASS SPECTROMETRY [LARGE SCALE ANALYSIS]</scope>
    <source>
        <tissue>Liver</tissue>
    </source>
</reference>
<proteinExistence type="evidence at protein level"/>
<feature type="chain" id="PRO_0000053880" description="Pleckstrin homology domain-containing family A member 4">
    <location>
        <begin position="1"/>
        <end position="779"/>
    </location>
</feature>
<feature type="domain" description="PH" evidence="1">
    <location>
        <begin position="54"/>
        <end position="153"/>
    </location>
</feature>
<feature type="region of interest" description="Disordered" evidence="2">
    <location>
        <begin position="152"/>
        <end position="352"/>
    </location>
</feature>
<feature type="region of interest" description="Disordered" evidence="2">
    <location>
        <begin position="492"/>
        <end position="670"/>
    </location>
</feature>
<feature type="region of interest" description="Disordered" evidence="2">
    <location>
        <begin position="691"/>
        <end position="764"/>
    </location>
</feature>
<feature type="compositionally biased region" description="Basic and acidic residues" evidence="2">
    <location>
        <begin position="184"/>
        <end position="193"/>
    </location>
</feature>
<feature type="compositionally biased region" description="Polar residues" evidence="2">
    <location>
        <begin position="315"/>
        <end position="332"/>
    </location>
</feature>
<feature type="compositionally biased region" description="Low complexity" evidence="2">
    <location>
        <begin position="525"/>
        <end position="535"/>
    </location>
</feature>
<feature type="compositionally biased region" description="Basic and acidic residues" evidence="2">
    <location>
        <begin position="536"/>
        <end position="551"/>
    </location>
</feature>
<feature type="compositionally biased region" description="Basic and acidic residues" evidence="2">
    <location>
        <begin position="594"/>
        <end position="603"/>
    </location>
</feature>
<feature type="compositionally biased region" description="Polar residues" evidence="2">
    <location>
        <begin position="647"/>
        <end position="663"/>
    </location>
</feature>
<feature type="compositionally biased region" description="Pro residues" evidence="2">
    <location>
        <begin position="704"/>
        <end position="724"/>
    </location>
</feature>
<feature type="modified residue" description="Phosphoserine" evidence="8">
    <location>
        <position position="164"/>
    </location>
</feature>
<feature type="modified residue" description="Phosphoserine" evidence="7">
    <location>
        <position position="559"/>
    </location>
</feature>
<feature type="splice variant" id="VSP_009770" description="In isoform 2." evidence="5">
    <location>
        <begin position="325"/>
        <end position="349"/>
    </location>
</feature>
<feature type="splice variant" id="VSP_009771" description="In isoform 2." evidence="5">
    <original>APVARPRMSAQEQLERMRRNQECGRPF</original>
    <variation>SKEHHPLLADFRRSPGAGSQPLPSPGY</variation>
    <location>
        <begin position="582"/>
        <end position="608"/>
    </location>
</feature>
<feature type="splice variant" id="VSP_009772" description="In isoform 2." evidence="5">
    <location>
        <begin position="609"/>
        <end position="779"/>
    </location>
</feature>
<feature type="sequence variant" id="VAR_056667" description="In dbSNP:rs506425." evidence="4">
    <original>I</original>
    <variation>V</variation>
    <location>
        <position position="37"/>
    </location>
</feature>
<feature type="sequence variant" id="VAR_056668" description="In dbSNP:rs12460394.">
    <original>R</original>
    <variation>Q</variation>
    <location>
        <position position="597"/>
    </location>
</feature>
<feature type="sequence variant" id="VAR_056669" description="In dbSNP:rs34460869.">
    <original>T</original>
    <variation>A</variation>
    <location>
        <position position="714"/>
    </location>
</feature>
<feature type="sequence variant" id="VAR_056670" description="In dbSNP:rs35965411.">
    <original>G</original>
    <variation>V</variation>
    <location>
        <position position="742"/>
    </location>
</feature>
<feature type="sequence conflict" description="In Ref. 1; AAG01896." evidence="6" ref="1">
    <original>S</original>
    <variation>N</variation>
    <location>
        <position position="590"/>
    </location>
</feature>
<feature type="sequence conflict" description="In Ref. 1; AAG01896." evidence="6" ref="1">
    <original>F</original>
    <variation>L</variation>
    <location>
        <position position="779"/>
    </location>
</feature>
<feature type="strand" evidence="9">
    <location>
        <begin position="55"/>
        <end position="64"/>
    </location>
</feature>
<feature type="strand" evidence="9">
    <location>
        <begin position="66"/>
        <end position="69"/>
    </location>
</feature>
<feature type="strand" evidence="9">
    <location>
        <begin position="72"/>
        <end position="80"/>
    </location>
</feature>
<feature type="strand" evidence="9">
    <location>
        <begin position="83"/>
        <end position="89"/>
    </location>
</feature>
<feature type="strand" evidence="9">
    <location>
        <begin position="97"/>
        <end position="100"/>
    </location>
</feature>
<feature type="helix" evidence="9">
    <location>
        <begin position="101"/>
        <end position="103"/>
    </location>
</feature>
<feature type="strand" evidence="9">
    <location>
        <begin position="105"/>
        <end position="108"/>
    </location>
</feature>
<feature type="strand" evidence="9">
    <location>
        <begin position="116"/>
        <end position="124"/>
    </location>
</feature>
<feature type="strand" evidence="9">
    <location>
        <begin position="131"/>
        <end position="134"/>
    </location>
</feature>
<feature type="helix" evidence="9">
    <location>
        <begin position="138"/>
        <end position="152"/>
    </location>
</feature>
<dbReference type="EMBL" id="AY007233">
    <property type="protein sequence ID" value="AAG01896.1"/>
    <property type="molecule type" value="mRNA"/>
</dbReference>
<dbReference type="EMBL" id="BC024157">
    <property type="protein sequence ID" value="AAH24157.1"/>
    <property type="molecule type" value="mRNA"/>
</dbReference>
<dbReference type="EMBL" id="BC033832">
    <property type="protein sequence ID" value="AAH33832.1"/>
    <property type="status" value="ALT_INIT"/>
    <property type="molecule type" value="mRNA"/>
</dbReference>
<dbReference type="EMBL" id="BC064601">
    <property type="protein sequence ID" value="AAH64601.1"/>
    <property type="molecule type" value="mRNA"/>
</dbReference>
<dbReference type="CCDS" id="CCDS12737.1">
    <molecule id="Q9H4M7-1"/>
</dbReference>
<dbReference type="CCDS" id="CCDS54291.1">
    <molecule id="Q9H4M7-2"/>
</dbReference>
<dbReference type="RefSeq" id="NP_001154826.1">
    <molecule id="Q9H4M7-2"/>
    <property type="nucleotide sequence ID" value="NM_001161354.2"/>
</dbReference>
<dbReference type="RefSeq" id="NP_065955.2">
    <molecule id="Q9H4M7-1"/>
    <property type="nucleotide sequence ID" value="NM_020904.3"/>
</dbReference>
<dbReference type="PDB" id="1UPQ">
    <property type="method" value="X-ray"/>
    <property type="resolution" value="1.48 A"/>
    <property type="chains" value="A=45-167"/>
</dbReference>
<dbReference type="PDB" id="1UPR">
    <property type="method" value="X-ray"/>
    <property type="resolution" value="2.27 A"/>
    <property type="chains" value="A=45-167"/>
</dbReference>
<dbReference type="PDB" id="8OIO">
    <property type="method" value="X-ray"/>
    <property type="resolution" value="1.95 A"/>
    <property type="chains" value="E/F/G/H=174-184"/>
</dbReference>
<dbReference type="PDBsum" id="1UPQ"/>
<dbReference type="PDBsum" id="1UPR"/>
<dbReference type="PDBsum" id="8OIO"/>
<dbReference type="SMR" id="Q9H4M7"/>
<dbReference type="BioGRID" id="121697">
    <property type="interactions" value="2970"/>
</dbReference>
<dbReference type="FunCoup" id="Q9H4M7">
    <property type="interactions" value="313"/>
</dbReference>
<dbReference type="IntAct" id="Q9H4M7">
    <property type="interactions" value="13"/>
</dbReference>
<dbReference type="MINT" id="Q9H4M7"/>
<dbReference type="STRING" id="9606.ENSP00000263265"/>
<dbReference type="DrugBank" id="DB01863">
    <property type="generic name" value="Inositol 1,3,4,5-Tetrakisphosphate"/>
</dbReference>
<dbReference type="GlyGen" id="Q9H4M7">
    <property type="glycosylation" value="1 site"/>
</dbReference>
<dbReference type="iPTMnet" id="Q9H4M7"/>
<dbReference type="PhosphoSitePlus" id="Q9H4M7"/>
<dbReference type="BioMuta" id="PLEKHA4"/>
<dbReference type="DMDM" id="48474644"/>
<dbReference type="jPOST" id="Q9H4M7"/>
<dbReference type="MassIVE" id="Q9H4M7"/>
<dbReference type="PaxDb" id="9606-ENSP00000263265"/>
<dbReference type="PeptideAtlas" id="Q9H4M7"/>
<dbReference type="ProteomicsDB" id="80865">
    <molecule id="Q9H4M7-1"/>
</dbReference>
<dbReference type="ProteomicsDB" id="80866">
    <molecule id="Q9H4M7-2"/>
</dbReference>
<dbReference type="Antibodypedia" id="31820">
    <property type="antibodies" value="110 antibodies from 17 providers"/>
</dbReference>
<dbReference type="DNASU" id="57664"/>
<dbReference type="Ensembl" id="ENST00000263265.11">
    <molecule id="Q9H4M7-1"/>
    <property type="protein sequence ID" value="ENSP00000263265.5"/>
    <property type="gene ID" value="ENSG00000105559.13"/>
</dbReference>
<dbReference type="Ensembl" id="ENST00000355496.9">
    <molecule id="Q9H4M7-2"/>
    <property type="protein sequence ID" value="ENSP00000347683.4"/>
    <property type="gene ID" value="ENSG00000105559.13"/>
</dbReference>
<dbReference type="GeneID" id="57664"/>
<dbReference type="KEGG" id="hsa:57664"/>
<dbReference type="MANE-Select" id="ENST00000263265.11">
    <property type="protein sequence ID" value="ENSP00000263265.5"/>
    <property type="RefSeq nucleotide sequence ID" value="NM_020904.3"/>
    <property type="RefSeq protein sequence ID" value="NP_065955.2"/>
</dbReference>
<dbReference type="UCSC" id="uc002pkx.4">
    <molecule id="Q9H4M7-1"/>
    <property type="organism name" value="human"/>
</dbReference>
<dbReference type="AGR" id="HGNC:14339"/>
<dbReference type="CTD" id="57664"/>
<dbReference type="DisGeNET" id="57664"/>
<dbReference type="GeneCards" id="PLEKHA4"/>
<dbReference type="HGNC" id="HGNC:14339">
    <property type="gene designation" value="PLEKHA4"/>
</dbReference>
<dbReference type="HPA" id="ENSG00000105559">
    <property type="expression patterns" value="Low tissue specificity"/>
</dbReference>
<dbReference type="MIM" id="607769">
    <property type="type" value="gene"/>
</dbReference>
<dbReference type="neXtProt" id="NX_Q9H4M7"/>
<dbReference type="OpenTargets" id="ENSG00000105559"/>
<dbReference type="PharmGKB" id="PA33404"/>
<dbReference type="VEuPathDB" id="HostDB:ENSG00000105559"/>
<dbReference type="eggNOG" id="ENOG502RI1J">
    <property type="taxonomic scope" value="Eukaryota"/>
</dbReference>
<dbReference type="GeneTree" id="ENSGT00940000161121"/>
<dbReference type="HOGENOM" id="CLU_020168_0_0_1"/>
<dbReference type="InParanoid" id="Q9H4M7"/>
<dbReference type="OMA" id="WRGMMTG"/>
<dbReference type="OrthoDB" id="43122at2759"/>
<dbReference type="PAN-GO" id="Q9H4M7">
    <property type="GO annotations" value="7 GO annotations based on evolutionary models"/>
</dbReference>
<dbReference type="PhylomeDB" id="Q9H4M7"/>
<dbReference type="TreeFam" id="TF329090"/>
<dbReference type="PathwayCommons" id="Q9H4M7"/>
<dbReference type="Reactome" id="R-HSA-1660499">
    <property type="pathway name" value="Synthesis of PIPs at the plasma membrane"/>
</dbReference>
<dbReference type="SignaLink" id="Q9H4M7"/>
<dbReference type="BioGRID-ORCS" id="57664">
    <property type="hits" value="14 hits in 1160 CRISPR screens"/>
</dbReference>
<dbReference type="ChiTaRS" id="PLEKHA4">
    <property type="organism name" value="human"/>
</dbReference>
<dbReference type="EvolutionaryTrace" id="Q9H4M7"/>
<dbReference type="GenomeRNAi" id="57664"/>
<dbReference type="Pharos" id="Q9H4M7">
    <property type="development level" value="Tbio"/>
</dbReference>
<dbReference type="PRO" id="PR:Q9H4M7"/>
<dbReference type="Proteomes" id="UP000005640">
    <property type="component" value="Chromosome 19"/>
</dbReference>
<dbReference type="RNAct" id="Q9H4M7">
    <property type="molecule type" value="protein"/>
</dbReference>
<dbReference type="Bgee" id="ENSG00000105559">
    <property type="expression patterns" value="Expressed in sural nerve and 113 other cell types or tissues"/>
</dbReference>
<dbReference type="ExpressionAtlas" id="Q9H4M7">
    <property type="expression patterns" value="baseline and differential"/>
</dbReference>
<dbReference type="GO" id="GO:0005737">
    <property type="term" value="C:cytoplasm"/>
    <property type="evidence" value="ECO:0007669"/>
    <property type="project" value="UniProtKB-SubCell"/>
</dbReference>
<dbReference type="GO" id="GO:0031234">
    <property type="term" value="C:extrinsic component of cytoplasmic side of plasma membrane"/>
    <property type="evidence" value="ECO:0000314"/>
    <property type="project" value="FlyBase"/>
</dbReference>
<dbReference type="GO" id="GO:0005886">
    <property type="term" value="C:plasma membrane"/>
    <property type="evidence" value="ECO:0000304"/>
    <property type="project" value="Reactome"/>
</dbReference>
<dbReference type="GO" id="GO:0042802">
    <property type="term" value="F:identical protein binding"/>
    <property type="evidence" value="ECO:0000353"/>
    <property type="project" value="IntAct"/>
</dbReference>
<dbReference type="GO" id="GO:0043325">
    <property type="term" value="F:phosphatidylinositol-3,4-bisphosphate binding"/>
    <property type="evidence" value="ECO:0000314"/>
    <property type="project" value="FlyBase"/>
</dbReference>
<dbReference type="GO" id="GO:0080025">
    <property type="term" value="F:phosphatidylinositol-3,5-bisphosphate binding"/>
    <property type="evidence" value="ECO:0000314"/>
    <property type="project" value="FlyBase"/>
</dbReference>
<dbReference type="GO" id="GO:0032266">
    <property type="term" value="F:phosphatidylinositol-3-phosphate binding"/>
    <property type="evidence" value="ECO:0000314"/>
    <property type="project" value="UniProtKB"/>
</dbReference>
<dbReference type="GO" id="GO:0005546">
    <property type="term" value="F:phosphatidylinositol-4,5-bisphosphate binding"/>
    <property type="evidence" value="ECO:0000314"/>
    <property type="project" value="FlyBase"/>
</dbReference>
<dbReference type="GO" id="GO:0090263">
    <property type="term" value="P:positive regulation of canonical Wnt signaling pathway"/>
    <property type="evidence" value="ECO:0000315"/>
    <property type="project" value="FlyBase"/>
</dbReference>
<dbReference type="GO" id="GO:2000096">
    <property type="term" value="P:positive regulation of Wnt signaling pathway, planar cell polarity pathway"/>
    <property type="evidence" value="ECO:0000315"/>
    <property type="project" value="FlyBase"/>
</dbReference>
<dbReference type="CDD" id="cd13248">
    <property type="entry name" value="PH_PEPP1_2_3"/>
    <property type="match status" value="1"/>
</dbReference>
<dbReference type="FunFam" id="2.30.29.30:FF:000103">
    <property type="entry name" value="Pleckstrin homology domain-containing family A member 4"/>
    <property type="match status" value="1"/>
</dbReference>
<dbReference type="Gene3D" id="2.30.29.30">
    <property type="entry name" value="Pleckstrin-homology domain (PH domain)/Phosphotyrosine-binding domain (PTB)"/>
    <property type="match status" value="1"/>
</dbReference>
<dbReference type="InterPro" id="IPR011993">
    <property type="entry name" value="PH-like_dom_sf"/>
</dbReference>
<dbReference type="InterPro" id="IPR001849">
    <property type="entry name" value="PH_domain"/>
</dbReference>
<dbReference type="InterPro" id="IPR040392">
    <property type="entry name" value="PKHA4-7_PH"/>
</dbReference>
<dbReference type="PANTHER" id="PTHR12752">
    <property type="entry name" value="PHOSPHOINOSITOL 3-PHOSPHATE-BINDING PROTEIN"/>
    <property type="match status" value="1"/>
</dbReference>
<dbReference type="PANTHER" id="PTHR12752:SF7">
    <property type="entry name" value="PLECKSTRIN HOMOLOGY DOMAIN-CONTAINING FAMILY A MEMBER 4"/>
    <property type="match status" value="1"/>
</dbReference>
<dbReference type="Pfam" id="PF00169">
    <property type="entry name" value="PH"/>
    <property type="match status" value="1"/>
</dbReference>
<dbReference type="SMART" id="SM00233">
    <property type="entry name" value="PH"/>
    <property type="match status" value="1"/>
</dbReference>
<dbReference type="SUPFAM" id="SSF50729">
    <property type="entry name" value="PH domain-like"/>
    <property type="match status" value="1"/>
</dbReference>
<dbReference type="PROSITE" id="PS50003">
    <property type="entry name" value="PH_DOMAIN"/>
    <property type="match status" value="1"/>
</dbReference>
<keyword id="KW-0002">3D-structure</keyword>
<keyword id="KW-0025">Alternative splicing</keyword>
<keyword id="KW-0963">Cytoplasm</keyword>
<keyword id="KW-0446">Lipid-binding</keyword>
<keyword id="KW-0472">Membrane</keyword>
<keyword id="KW-0597">Phosphoprotein</keyword>
<keyword id="KW-1267">Proteomics identification</keyword>
<keyword id="KW-1185">Reference proteome</keyword>
<accession>Q9H4M7</accession>
<accession>Q8N4M8</accession>
<accession>Q8N658</accession>